<evidence type="ECO:0000255" key="1">
    <source>
        <dbReference type="HAMAP-Rule" id="MF_01251"/>
    </source>
</evidence>
<evidence type="ECO:0000255" key="2">
    <source>
        <dbReference type="PROSITE-ProRule" id="PRU01266"/>
    </source>
</evidence>
<evidence type="ECO:0000256" key="3">
    <source>
        <dbReference type="SAM" id="MobiDB-lite"/>
    </source>
</evidence>
<keyword id="KW-0004">4Fe-4S</keyword>
<keyword id="KW-0408">Iron</keyword>
<keyword id="KW-0411">Iron-sulfur</keyword>
<keyword id="KW-0479">Metal-binding</keyword>
<keyword id="KW-0949">S-adenosyl-L-methionine</keyword>
<gene>
    <name type="ordered locus">VP1980</name>
</gene>
<name>Y1980_VIBPA</name>
<sequence>MTNNITPIHEYKKYWAECFGTAPFLPTSRKEMDALGWDSCDIIIVTGDAYVDHPSFGMAIIGRLLEAQGFRVGIIAQPEWQNKNAFMQLGKPNLFFGITAGNMDSMINRYTADKKLRHDDAYTPNNEGGKRPDRATLVYSQRCREAYKEVPIVLGGIEASLRRVAHYDYWSDKVRRSVLFDAKADILLFGNAERALVEVAHRIANGEDISTMTNIRGTAVNLPAAPEGYTVIDSSRIEKPRKEAFVPKNPYEVETQCETKKDEPVAQPITIRPSRHDAATTAVRLPSFEKLRNDRILYAHASRVLHLETNPYSGRALLQSHGDRELWVNQAPIPLTTEEMDFVFGLPYARVPHPMYGKAKIPAYDMIKTSVNIMRGCFGGCSFCSITEHEGRIIQNRSKESIINEIEEIRDKVPGFTGTISDLGGPTANMYRLGCKDPKAEANCRRPSCVFPGICNKLNTDHKHTIDLYREARKVEGVKKVMVASGVRYDLAIESPEYVKELVTHHVGGYLKIAPEHTEKGPLDLMMKPGMGTYDRFKEMFEKYSAEAGKKQYLIPYFISAHPGTEDEDMLNLALWLKKNNFECDQVQNFYPSPMCNATSMYYSETNPLKRVKYKQREDIPVAKGERQRRLHKALLRYHDPANWPLIREALINMGKKHLIGDKPTCLVPAEDIDAQTPAQRRKSGRHGANRFATKHTKNQPGFGGHLNKRAEGGSKDGKPSGNRNGSGKVQGGQRPASNGQRPSGNGANRPAGSKPQGQGRPQGQGKPAGQRKPKRR</sequence>
<accession>Q87N95</accession>
<proteinExistence type="inferred from homology"/>
<comment type="cofactor">
    <cofactor evidence="1">
        <name>[4Fe-4S] cluster</name>
        <dbReference type="ChEBI" id="CHEBI:49883"/>
    </cofactor>
    <text evidence="1">Binds 1 [4Fe-4S] cluster. The cluster is coordinated with 3 cysteines and an exchangeable S-adenosyl-L-methionine.</text>
</comment>
<comment type="similarity">
    <text evidence="1">Belongs to the UPF0313 family.</text>
</comment>
<organism>
    <name type="scientific">Vibrio parahaemolyticus serotype O3:K6 (strain RIMD 2210633)</name>
    <dbReference type="NCBI Taxonomy" id="223926"/>
    <lineage>
        <taxon>Bacteria</taxon>
        <taxon>Pseudomonadati</taxon>
        <taxon>Pseudomonadota</taxon>
        <taxon>Gammaproteobacteria</taxon>
        <taxon>Vibrionales</taxon>
        <taxon>Vibrionaceae</taxon>
        <taxon>Vibrio</taxon>
    </lineage>
</organism>
<dbReference type="EMBL" id="BA000031">
    <property type="protein sequence ID" value="BAC60243.1"/>
    <property type="molecule type" value="Genomic_DNA"/>
</dbReference>
<dbReference type="RefSeq" id="NP_798359.1">
    <property type="nucleotide sequence ID" value="NC_004603.1"/>
</dbReference>
<dbReference type="RefSeq" id="WP_005481673.1">
    <property type="nucleotide sequence ID" value="NC_004603.1"/>
</dbReference>
<dbReference type="GeneID" id="1189491"/>
<dbReference type="KEGG" id="vpa:VP1980"/>
<dbReference type="PATRIC" id="fig|223926.6.peg.1893"/>
<dbReference type="eggNOG" id="COG1032">
    <property type="taxonomic scope" value="Bacteria"/>
</dbReference>
<dbReference type="HOGENOM" id="CLU_018288_2_0_6"/>
<dbReference type="Proteomes" id="UP000002493">
    <property type="component" value="Chromosome 1"/>
</dbReference>
<dbReference type="GO" id="GO:0051539">
    <property type="term" value="F:4 iron, 4 sulfur cluster binding"/>
    <property type="evidence" value="ECO:0007669"/>
    <property type="project" value="UniProtKB-KW"/>
</dbReference>
<dbReference type="GO" id="GO:0003824">
    <property type="term" value="F:catalytic activity"/>
    <property type="evidence" value="ECO:0007669"/>
    <property type="project" value="InterPro"/>
</dbReference>
<dbReference type="GO" id="GO:0005506">
    <property type="term" value="F:iron ion binding"/>
    <property type="evidence" value="ECO:0007669"/>
    <property type="project" value="UniProtKB-UniRule"/>
</dbReference>
<dbReference type="Gene3D" id="3.80.30.20">
    <property type="entry name" value="tm_1862 like domain"/>
    <property type="match status" value="1"/>
</dbReference>
<dbReference type="HAMAP" id="MF_01251">
    <property type="entry name" value="UPF0313"/>
    <property type="match status" value="1"/>
</dbReference>
<dbReference type="InterPro" id="IPR006638">
    <property type="entry name" value="Elp3/MiaA/NifB-like_rSAM"/>
</dbReference>
<dbReference type="InterPro" id="IPR020612">
    <property type="entry name" value="Methylthiotransferase_CS"/>
</dbReference>
<dbReference type="InterPro" id="IPR007197">
    <property type="entry name" value="rSAM"/>
</dbReference>
<dbReference type="InterPro" id="IPR023404">
    <property type="entry name" value="rSAM_horseshoe"/>
</dbReference>
<dbReference type="InterPro" id="IPR022946">
    <property type="entry name" value="UPF0313"/>
</dbReference>
<dbReference type="InterPro" id="IPR024560">
    <property type="entry name" value="UPF0313_C"/>
</dbReference>
<dbReference type="InterPro" id="IPR013704">
    <property type="entry name" value="UPF0313_N"/>
</dbReference>
<dbReference type="NCBIfam" id="TIGR03904">
    <property type="entry name" value="SAM_YgiQ"/>
    <property type="match status" value="1"/>
</dbReference>
<dbReference type="PANTHER" id="PTHR32331">
    <property type="entry name" value="UPF0313 PROTEIN YGIQ"/>
    <property type="match status" value="1"/>
</dbReference>
<dbReference type="PANTHER" id="PTHR32331:SF0">
    <property type="entry name" value="UPF0313 PROTEIN YGIQ"/>
    <property type="match status" value="1"/>
</dbReference>
<dbReference type="Pfam" id="PF11842">
    <property type="entry name" value="DUF3362"/>
    <property type="match status" value="1"/>
</dbReference>
<dbReference type="Pfam" id="PF04055">
    <property type="entry name" value="Radical_SAM"/>
    <property type="match status" value="1"/>
</dbReference>
<dbReference type="Pfam" id="PF08497">
    <property type="entry name" value="Radical_SAM_N"/>
    <property type="match status" value="1"/>
</dbReference>
<dbReference type="SFLD" id="SFLDG01082">
    <property type="entry name" value="B12-binding_domain_containing"/>
    <property type="match status" value="1"/>
</dbReference>
<dbReference type="SFLD" id="SFLDS00029">
    <property type="entry name" value="Radical_SAM"/>
    <property type="match status" value="1"/>
</dbReference>
<dbReference type="SFLD" id="SFLDG01069">
    <property type="entry name" value="UPF0313"/>
    <property type="match status" value="1"/>
</dbReference>
<dbReference type="SMART" id="SM00729">
    <property type="entry name" value="Elp3"/>
    <property type="match status" value="1"/>
</dbReference>
<dbReference type="SUPFAM" id="SSF102114">
    <property type="entry name" value="Radical SAM enzymes"/>
    <property type="match status" value="1"/>
</dbReference>
<dbReference type="PROSITE" id="PS51918">
    <property type="entry name" value="RADICAL_SAM"/>
    <property type="match status" value="1"/>
</dbReference>
<feature type="chain" id="PRO_0000076399" description="UPF0313 protein VP1980">
    <location>
        <begin position="1"/>
        <end position="777"/>
    </location>
</feature>
<feature type="domain" description="Radical SAM core" evidence="2">
    <location>
        <begin position="363"/>
        <end position="642"/>
    </location>
</feature>
<feature type="region of interest" description="Disordered" evidence="3">
    <location>
        <begin position="675"/>
        <end position="777"/>
    </location>
</feature>
<feature type="compositionally biased region" description="Basic residues" evidence="3">
    <location>
        <begin position="680"/>
        <end position="698"/>
    </location>
</feature>
<feature type="compositionally biased region" description="Basic and acidic residues" evidence="3">
    <location>
        <begin position="709"/>
        <end position="719"/>
    </location>
</feature>
<feature type="compositionally biased region" description="Polar residues" evidence="3">
    <location>
        <begin position="736"/>
        <end position="747"/>
    </location>
</feature>
<feature type="compositionally biased region" description="Low complexity" evidence="3">
    <location>
        <begin position="755"/>
        <end position="769"/>
    </location>
</feature>
<feature type="binding site" evidence="1">
    <location>
        <position position="377"/>
    </location>
    <ligand>
        <name>[4Fe-4S] cluster</name>
        <dbReference type="ChEBI" id="CHEBI:49883"/>
        <note>4Fe-4S-S-AdoMet</note>
    </ligand>
</feature>
<feature type="binding site" evidence="1">
    <location>
        <position position="381"/>
    </location>
    <ligand>
        <name>[4Fe-4S] cluster</name>
        <dbReference type="ChEBI" id="CHEBI:49883"/>
        <note>4Fe-4S-S-AdoMet</note>
    </ligand>
</feature>
<feature type="binding site" evidence="1">
    <location>
        <position position="384"/>
    </location>
    <ligand>
        <name>[4Fe-4S] cluster</name>
        <dbReference type="ChEBI" id="CHEBI:49883"/>
        <note>4Fe-4S-S-AdoMet</note>
    </ligand>
</feature>
<protein>
    <recommendedName>
        <fullName evidence="1">UPF0313 protein VP1980</fullName>
    </recommendedName>
</protein>
<reference key="1">
    <citation type="journal article" date="2003" name="Lancet">
        <title>Genome sequence of Vibrio parahaemolyticus: a pathogenic mechanism distinct from that of V. cholerae.</title>
        <authorList>
            <person name="Makino K."/>
            <person name="Oshima K."/>
            <person name="Kurokawa K."/>
            <person name="Yokoyama K."/>
            <person name="Uda T."/>
            <person name="Tagomori K."/>
            <person name="Iijima Y."/>
            <person name="Najima M."/>
            <person name="Nakano M."/>
            <person name="Yamashita A."/>
            <person name="Kubota Y."/>
            <person name="Kimura S."/>
            <person name="Yasunaga T."/>
            <person name="Honda T."/>
            <person name="Shinagawa H."/>
            <person name="Hattori M."/>
            <person name="Iida T."/>
        </authorList>
    </citation>
    <scope>NUCLEOTIDE SEQUENCE [LARGE SCALE GENOMIC DNA]</scope>
    <source>
        <strain>RIMD 2210633</strain>
    </source>
</reference>